<comment type="function">
    <text evidence="1">One of the primary rRNA binding proteins, this protein initially binds near the 5'-end of the 23S rRNA. It is important during the early stages of 50S assembly. It makes multiple contacts with different domains of the 23S rRNA in the assembled 50S subunit and ribosome.</text>
</comment>
<comment type="function">
    <text evidence="1">Forms part of the polypeptide exit tunnel.</text>
</comment>
<comment type="subunit">
    <text evidence="1">Part of the 50S ribosomal subunit.</text>
</comment>
<comment type="similarity">
    <text evidence="1">Belongs to the universal ribosomal protein uL4 family.</text>
</comment>
<evidence type="ECO:0000255" key="1">
    <source>
        <dbReference type="HAMAP-Rule" id="MF_01328"/>
    </source>
</evidence>
<evidence type="ECO:0000256" key="2">
    <source>
        <dbReference type="SAM" id="MobiDB-lite"/>
    </source>
</evidence>
<evidence type="ECO:0000305" key="3"/>
<gene>
    <name evidence="1" type="primary">rplD</name>
    <name type="ordered locus">mlr0292</name>
</gene>
<sequence>MDLKITTLGGKDAGKVKLSEEIFGLDPREDILQRVVRWQLAKKQQGTHKAKGRAEIARTGAKMYKQKGTGRARHHSARAPQFRGGGKAHGPVVRSHEHDLPKNVRALGLKHALSAKAKSASIIVIDELKLTEAKTKALIANFATLGLSNALVIGGAELDKNFKLAATNIPNIDVLPIQGINVYDILRRGTLVLSKAAVEALEERFK</sequence>
<keyword id="KW-0687">Ribonucleoprotein</keyword>
<keyword id="KW-0689">Ribosomal protein</keyword>
<keyword id="KW-0694">RNA-binding</keyword>
<keyword id="KW-0699">rRNA-binding</keyword>
<accession>Q98N56</accession>
<reference key="1">
    <citation type="journal article" date="2000" name="DNA Res.">
        <title>Complete genome structure of the nitrogen-fixing symbiotic bacterium Mesorhizobium loti.</title>
        <authorList>
            <person name="Kaneko T."/>
            <person name="Nakamura Y."/>
            <person name="Sato S."/>
            <person name="Asamizu E."/>
            <person name="Kato T."/>
            <person name="Sasamoto S."/>
            <person name="Watanabe A."/>
            <person name="Idesawa K."/>
            <person name="Ishikawa A."/>
            <person name="Kawashima K."/>
            <person name="Kimura T."/>
            <person name="Kishida Y."/>
            <person name="Kiyokawa C."/>
            <person name="Kohara M."/>
            <person name="Matsumoto M."/>
            <person name="Matsuno A."/>
            <person name="Mochizuki Y."/>
            <person name="Nakayama S."/>
            <person name="Nakazaki N."/>
            <person name="Shimpo S."/>
            <person name="Sugimoto M."/>
            <person name="Takeuchi C."/>
            <person name="Yamada M."/>
            <person name="Tabata S."/>
        </authorList>
    </citation>
    <scope>NUCLEOTIDE SEQUENCE [LARGE SCALE GENOMIC DNA]</scope>
    <source>
        <strain>LMG 29417 / CECT 9101 / MAFF 303099</strain>
    </source>
</reference>
<feature type="chain" id="PRO_0000129263" description="Large ribosomal subunit protein uL4">
    <location>
        <begin position="1"/>
        <end position="206"/>
    </location>
</feature>
<feature type="region of interest" description="Disordered" evidence="2">
    <location>
        <begin position="63"/>
        <end position="94"/>
    </location>
</feature>
<feature type="compositionally biased region" description="Basic residues" evidence="2">
    <location>
        <begin position="64"/>
        <end position="77"/>
    </location>
</feature>
<dbReference type="EMBL" id="BA000012">
    <property type="protein sequence ID" value="BAB47907.1"/>
    <property type="molecule type" value="Genomic_DNA"/>
</dbReference>
<dbReference type="RefSeq" id="WP_010909274.1">
    <property type="nucleotide sequence ID" value="NC_002678.2"/>
</dbReference>
<dbReference type="SMR" id="Q98N56"/>
<dbReference type="KEGG" id="mlo:mlr0292"/>
<dbReference type="PATRIC" id="fig|266835.9.peg.230"/>
<dbReference type="eggNOG" id="COG0088">
    <property type="taxonomic scope" value="Bacteria"/>
</dbReference>
<dbReference type="HOGENOM" id="CLU_041575_5_1_5"/>
<dbReference type="Proteomes" id="UP000000552">
    <property type="component" value="Chromosome"/>
</dbReference>
<dbReference type="GO" id="GO:1990904">
    <property type="term" value="C:ribonucleoprotein complex"/>
    <property type="evidence" value="ECO:0007669"/>
    <property type="project" value="UniProtKB-KW"/>
</dbReference>
<dbReference type="GO" id="GO:0005840">
    <property type="term" value="C:ribosome"/>
    <property type="evidence" value="ECO:0007669"/>
    <property type="project" value="UniProtKB-KW"/>
</dbReference>
<dbReference type="GO" id="GO:0019843">
    <property type="term" value="F:rRNA binding"/>
    <property type="evidence" value="ECO:0007669"/>
    <property type="project" value="UniProtKB-UniRule"/>
</dbReference>
<dbReference type="GO" id="GO:0003735">
    <property type="term" value="F:structural constituent of ribosome"/>
    <property type="evidence" value="ECO:0007669"/>
    <property type="project" value="InterPro"/>
</dbReference>
<dbReference type="GO" id="GO:0006412">
    <property type="term" value="P:translation"/>
    <property type="evidence" value="ECO:0007669"/>
    <property type="project" value="UniProtKB-UniRule"/>
</dbReference>
<dbReference type="Gene3D" id="3.40.1370.10">
    <property type="match status" value="1"/>
</dbReference>
<dbReference type="HAMAP" id="MF_01328_B">
    <property type="entry name" value="Ribosomal_uL4_B"/>
    <property type="match status" value="1"/>
</dbReference>
<dbReference type="InterPro" id="IPR002136">
    <property type="entry name" value="Ribosomal_uL4"/>
</dbReference>
<dbReference type="InterPro" id="IPR013005">
    <property type="entry name" value="Ribosomal_uL4-like"/>
</dbReference>
<dbReference type="InterPro" id="IPR023574">
    <property type="entry name" value="Ribosomal_uL4_dom_sf"/>
</dbReference>
<dbReference type="NCBIfam" id="TIGR03953">
    <property type="entry name" value="rplD_bact"/>
    <property type="match status" value="1"/>
</dbReference>
<dbReference type="PANTHER" id="PTHR10746">
    <property type="entry name" value="50S RIBOSOMAL PROTEIN L4"/>
    <property type="match status" value="1"/>
</dbReference>
<dbReference type="PANTHER" id="PTHR10746:SF6">
    <property type="entry name" value="LARGE RIBOSOMAL SUBUNIT PROTEIN UL4M"/>
    <property type="match status" value="1"/>
</dbReference>
<dbReference type="Pfam" id="PF00573">
    <property type="entry name" value="Ribosomal_L4"/>
    <property type="match status" value="1"/>
</dbReference>
<dbReference type="SUPFAM" id="SSF52166">
    <property type="entry name" value="Ribosomal protein L4"/>
    <property type="match status" value="1"/>
</dbReference>
<organism>
    <name type="scientific">Mesorhizobium japonicum (strain LMG 29417 / CECT 9101 / MAFF 303099)</name>
    <name type="common">Mesorhizobium loti (strain MAFF 303099)</name>
    <dbReference type="NCBI Taxonomy" id="266835"/>
    <lineage>
        <taxon>Bacteria</taxon>
        <taxon>Pseudomonadati</taxon>
        <taxon>Pseudomonadota</taxon>
        <taxon>Alphaproteobacteria</taxon>
        <taxon>Hyphomicrobiales</taxon>
        <taxon>Phyllobacteriaceae</taxon>
        <taxon>Mesorhizobium</taxon>
    </lineage>
</organism>
<name>RL4_RHILO</name>
<proteinExistence type="inferred from homology"/>
<protein>
    <recommendedName>
        <fullName evidence="1">Large ribosomal subunit protein uL4</fullName>
    </recommendedName>
    <alternativeName>
        <fullName evidence="3">50S ribosomal protein L4</fullName>
    </alternativeName>
</protein>